<sequence>MGCLVVVKEILRLLFLLAMYELGKYVTEQVYIMMTANDDVEAPSDFAKLSDQSDLMRAEVSE</sequence>
<name>RINB_BPPHA</name>
<dbReference type="EMBL" id="L07580">
    <property type="protein sequence ID" value="AAA32199.1"/>
    <property type="molecule type" value="Genomic_DNA"/>
</dbReference>
<dbReference type="PIR" id="A49703">
    <property type="entry name" value="A49703"/>
</dbReference>
<dbReference type="RefSeq" id="NP_803280.1">
    <property type="nucleotide sequence ID" value="NC_004615.1"/>
</dbReference>
<dbReference type="KEGG" id="vg:1258036"/>
<dbReference type="OrthoDB" id="26609at10239"/>
<dbReference type="GO" id="GO:0006355">
    <property type="term" value="P:regulation of DNA-templated transcription"/>
    <property type="evidence" value="ECO:0007669"/>
    <property type="project" value="InterPro"/>
</dbReference>
<dbReference type="InterPro" id="IPR009300">
    <property type="entry name" value="Transcription_activator_RinB"/>
</dbReference>
<dbReference type="NCBIfam" id="NF047427">
    <property type="entry name" value="phage_activ_RinB"/>
    <property type="match status" value="1"/>
</dbReference>
<dbReference type="Pfam" id="PF06116">
    <property type="entry name" value="RinB"/>
    <property type="match status" value="1"/>
</dbReference>
<accession>Q03183</accession>
<feature type="chain" id="PRO_0000097342" description="Transcriptional activator rinB">
    <location>
        <begin position="1"/>
        <end position="62"/>
    </location>
</feature>
<gene>
    <name type="primary">RINB</name>
</gene>
<comment type="function">
    <text>Activates int gene expression, probably by providing stability to rinA. Int activation requires both rinA and rinB.</text>
</comment>
<organism>
    <name type="scientific">Staphylococcus phage phi11</name>
    <name type="common">Bacteriophage phi-11</name>
    <dbReference type="NCBI Taxonomy" id="2681609"/>
    <lineage>
        <taxon>Viruses</taxon>
        <taxon>Duplodnaviria</taxon>
        <taxon>Heunggongvirae</taxon>
        <taxon>Uroviricota</taxon>
        <taxon>Caudoviricetes</taxon>
        <taxon>Azeredovirinae</taxon>
        <taxon>Dubowvirus</taxon>
        <taxon>Dubowvirus dv11</taxon>
    </lineage>
</organism>
<organismHost>
    <name type="scientific">Staphylococcus aureus</name>
    <dbReference type="NCBI Taxonomy" id="1280"/>
</organismHost>
<reference key="1">
    <citation type="journal article" date="1993" name="J. Bacteriol.">
        <title>Cloning, sequencing, and genetic characterization of regulatory genes, rinA and rinB, required for the activation of staphylococcal phage phi 11 int expression.</title>
        <authorList>
            <person name="Ye Z.-H."/>
            <person name="Lee C.Y."/>
        </authorList>
    </citation>
    <scope>NUCLEOTIDE SEQUENCE [GENOMIC DNA]</scope>
</reference>
<protein>
    <recommendedName>
        <fullName>Transcriptional activator rinB</fullName>
    </recommendedName>
</protein>
<proteinExistence type="predicted"/>
<keyword id="KW-0010">Activator</keyword>
<keyword id="KW-0804">Transcription</keyword>
<keyword id="KW-0805">Transcription regulation</keyword>